<gene>
    <name evidence="1" type="primary">aroA</name>
    <name type="ordered locus">M1425_1793</name>
</gene>
<feature type="chain" id="PRO_1000204174" description="3-phosphoshikimate 1-carboxyvinyltransferase">
    <location>
        <begin position="1"/>
        <end position="414"/>
    </location>
</feature>
<feature type="active site" description="Proton acceptor" evidence="1">
    <location>
        <position position="296"/>
    </location>
</feature>
<feature type="binding site" evidence="1">
    <location>
        <position position="20"/>
    </location>
    <ligand>
        <name>3-phosphoshikimate</name>
        <dbReference type="ChEBI" id="CHEBI:145989"/>
    </ligand>
</feature>
<feature type="binding site" evidence="1">
    <location>
        <position position="20"/>
    </location>
    <ligand>
        <name>phosphoenolpyruvate</name>
        <dbReference type="ChEBI" id="CHEBI:58702"/>
    </ligand>
</feature>
<feature type="binding site" evidence="1">
    <location>
        <position position="21"/>
    </location>
    <ligand>
        <name>3-phosphoshikimate</name>
        <dbReference type="ChEBI" id="CHEBI:145989"/>
    </ligand>
</feature>
<feature type="binding site" evidence="1">
    <location>
        <position position="25"/>
    </location>
    <ligand>
        <name>3-phosphoshikimate</name>
        <dbReference type="ChEBI" id="CHEBI:145989"/>
    </ligand>
</feature>
<feature type="binding site" evidence="1">
    <location>
        <position position="85"/>
    </location>
    <ligand>
        <name>phosphoenolpyruvate</name>
        <dbReference type="ChEBI" id="CHEBI:58702"/>
    </ligand>
</feature>
<feature type="binding site" evidence="1">
    <location>
        <position position="113"/>
    </location>
    <ligand>
        <name>phosphoenolpyruvate</name>
        <dbReference type="ChEBI" id="CHEBI:58702"/>
    </ligand>
</feature>
<feature type="binding site" evidence="1">
    <location>
        <position position="154"/>
    </location>
    <ligand>
        <name>3-phosphoshikimate</name>
        <dbReference type="ChEBI" id="CHEBI:145989"/>
    </ligand>
</feature>
<feature type="binding site" evidence="1">
    <location>
        <position position="155"/>
    </location>
    <ligand>
        <name>3-phosphoshikimate</name>
        <dbReference type="ChEBI" id="CHEBI:145989"/>
    </ligand>
</feature>
<feature type="binding site" evidence="1">
    <location>
        <position position="156"/>
    </location>
    <ligand>
        <name>3-phosphoshikimate</name>
        <dbReference type="ChEBI" id="CHEBI:145989"/>
    </ligand>
</feature>
<feature type="binding site" evidence="1">
    <location>
        <position position="156"/>
    </location>
    <ligand>
        <name>phosphoenolpyruvate</name>
        <dbReference type="ChEBI" id="CHEBI:58702"/>
    </ligand>
</feature>
<feature type="binding site" evidence="1">
    <location>
        <position position="181"/>
    </location>
    <ligand>
        <name>3-phosphoshikimate</name>
        <dbReference type="ChEBI" id="CHEBI:145989"/>
    </ligand>
</feature>
<feature type="binding site" evidence="1">
    <location>
        <position position="296"/>
    </location>
    <ligand>
        <name>3-phosphoshikimate</name>
        <dbReference type="ChEBI" id="CHEBI:145989"/>
    </ligand>
</feature>
<feature type="binding site" evidence="1">
    <location>
        <position position="323"/>
    </location>
    <ligand>
        <name>3-phosphoshikimate</name>
        <dbReference type="ChEBI" id="CHEBI:145989"/>
    </ligand>
</feature>
<feature type="binding site" evidence="1">
    <location>
        <position position="327"/>
    </location>
    <ligand>
        <name>phosphoenolpyruvate</name>
        <dbReference type="ChEBI" id="CHEBI:58702"/>
    </ligand>
</feature>
<feature type="binding site" evidence="1">
    <location>
        <position position="371"/>
    </location>
    <ligand>
        <name>phosphoenolpyruvate</name>
        <dbReference type="ChEBI" id="CHEBI:58702"/>
    </ligand>
</feature>
<feature type="binding site" evidence="1">
    <location>
        <position position="395"/>
    </location>
    <ligand>
        <name>phosphoenolpyruvate</name>
        <dbReference type="ChEBI" id="CHEBI:58702"/>
    </ligand>
</feature>
<organism>
    <name type="scientific">Saccharolobus islandicus (strain M.14.25 / Kamchatka #1)</name>
    <name type="common">Sulfolobus islandicus</name>
    <dbReference type="NCBI Taxonomy" id="427317"/>
    <lineage>
        <taxon>Archaea</taxon>
        <taxon>Thermoproteota</taxon>
        <taxon>Thermoprotei</taxon>
        <taxon>Sulfolobales</taxon>
        <taxon>Sulfolobaceae</taxon>
        <taxon>Saccharolobus</taxon>
    </lineage>
</organism>
<protein>
    <recommendedName>
        <fullName evidence="1">3-phosphoshikimate 1-carboxyvinyltransferase</fullName>
        <ecNumber evidence="1">2.5.1.19</ecNumber>
    </recommendedName>
    <alternativeName>
        <fullName evidence="1">5-enolpyruvylshikimate-3-phosphate synthase</fullName>
        <shortName evidence="1">EPSP synthase</shortName>
        <shortName evidence="1">EPSPS</shortName>
    </alternativeName>
</protein>
<name>AROA_SACI4</name>
<sequence>MIVRIYPSEISGTIKAPQSKSLAIRLIFLSLFTRIHLHNLVLSEDVIDAINSVRALGVEVKNNSEFIPPEKLEIKKKFIKLKGSGTTLRMLIPIVAAIGGEVTIDAEESLRRRPLKRIVEALSNYGISFSSSSLPLTITGKLSSYNIKISGDESSQYISGLIYALHILNGGSIEILPPISSKSYILLTVDLFNRFGSNVKFYGNKIHINPNNLVEFQGEVAGDYGLASFYALSALLSGGRTTIVNLWEPKEYFGDHSIVKILKEMGATSEYLDGKWYVEAKDKYSSIKVNIDDAPDLAMTIAGLAAIAEGTSEITGIERLRIKESDRIESIRKVLGLYGVGSEVKSNSILIFGINKRMLSSPITDCLNDHRVAMMSSALALVNGGVITSAECVSKSNPNYWQDLLSLNAKISIE</sequence>
<keyword id="KW-0028">Amino-acid biosynthesis</keyword>
<keyword id="KW-0057">Aromatic amino acid biosynthesis</keyword>
<keyword id="KW-0963">Cytoplasm</keyword>
<keyword id="KW-0808">Transferase</keyword>
<reference key="1">
    <citation type="journal article" date="2009" name="Proc. Natl. Acad. Sci. U.S.A.">
        <title>Biogeography of the Sulfolobus islandicus pan-genome.</title>
        <authorList>
            <person name="Reno M.L."/>
            <person name="Held N.L."/>
            <person name="Fields C.J."/>
            <person name="Burke P.V."/>
            <person name="Whitaker R.J."/>
        </authorList>
    </citation>
    <scope>NUCLEOTIDE SEQUENCE [LARGE SCALE GENOMIC DNA]</scope>
    <source>
        <strain>M.14.25 / Kamchatka #1</strain>
    </source>
</reference>
<accession>C3MXK4</accession>
<dbReference type="EC" id="2.5.1.19" evidence="1"/>
<dbReference type="EMBL" id="CP001400">
    <property type="protein sequence ID" value="ACP38538.1"/>
    <property type="molecule type" value="Genomic_DNA"/>
</dbReference>
<dbReference type="RefSeq" id="WP_012711768.1">
    <property type="nucleotide sequence ID" value="NC_012588.1"/>
</dbReference>
<dbReference type="SMR" id="C3MXK4"/>
<dbReference type="GeneID" id="84062145"/>
<dbReference type="KEGG" id="sia:M1425_1793"/>
<dbReference type="HOGENOM" id="CLU_024321_0_0_2"/>
<dbReference type="UniPathway" id="UPA00053"/>
<dbReference type="Proteomes" id="UP000001350">
    <property type="component" value="Chromosome"/>
</dbReference>
<dbReference type="GO" id="GO:0005737">
    <property type="term" value="C:cytoplasm"/>
    <property type="evidence" value="ECO:0007669"/>
    <property type="project" value="UniProtKB-SubCell"/>
</dbReference>
<dbReference type="GO" id="GO:0003866">
    <property type="term" value="F:3-phosphoshikimate 1-carboxyvinyltransferase activity"/>
    <property type="evidence" value="ECO:0007669"/>
    <property type="project" value="UniProtKB-UniRule"/>
</dbReference>
<dbReference type="GO" id="GO:0008652">
    <property type="term" value="P:amino acid biosynthetic process"/>
    <property type="evidence" value="ECO:0007669"/>
    <property type="project" value="UniProtKB-KW"/>
</dbReference>
<dbReference type="GO" id="GO:0009073">
    <property type="term" value="P:aromatic amino acid family biosynthetic process"/>
    <property type="evidence" value="ECO:0007669"/>
    <property type="project" value="UniProtKB-KW"/>
</dbReference>
<dbReference type="GO" id="GO:0009423">
    <property type="term" value="P:chorismate biosynthetic process"/>
    <property type="evidence" value="ECO:0007669"/>
    <property type="project" value="UniProtKB-UniRule"/>
</dbReference>
<dbReference type="CDD" id="cd01556">
    <property type="entry name" value="EPSP_synthase"/>
    <property type="match status" value="1"/>
</dbReference>
<dbReference type="FunFam" id="3.65.10.10:FF:000015">
    <property type="entry name" value="3-phosphoshikimate 1-carboxyvinyltransferase"/>
    <property type="match status" value="1"/>
</dbReference>
<dbReference type="Gene3D" id="3.65.10.10">
    <property type="entry name" value="Enolpyruvate transferase domain"/>
    <property type="match status" value="2"/>
</dbReference>
<dbReference type="HAMAP" id="MF_00210">
    <property type="entry name" value="EPSP_synth"/>
    <property type="match status" value="1"/>
</dbReference>
<dbReference type="InterPro" id="IPR001986">
    <property type="entry name" value="Enolpyruvate_Tfrase_dom"/>
</dbReference>
<dbReference type="InterPro" id="IPR036968">
    <property type="entry name" value="Enolpyruvate_Tfrase_sf"/>
</dbReference>
<dbReference type="InterPro" id="IPR006264">
    <property type="entry name" value="EPSP_synthase"/>
</dbReference>
<dbReference type="InterPro" id="IPR023193">
    <property type="entry name" value="EPSP_synthase_CS"/>
</dbReference>
<dbReference type="InterPro" id="IPR013792">
    <property type="entry name" value="RNA3'P_cycl/enolpyr_Trfase_a/b"/>
</dbReference>
<dbReference type="NCBIfam" id="TIGR01356">
    <property type="entry name" value="aroA"/>
    <property type="match status" value="1"/>
</dbReference>
<dbReference type="PANTHER" id="PTHR21090">
    <property type="entry name" value="AROM/DEHYDROQUINATE SYNTHASE"/>
    <property type="match status" value="1"/>
</dbReference>
<dbReference type="PANTHER" id="PTHR21090:SF5">
    <property type="entry name" value="PENTAFUNCTIONAL AROM POLYPEPTIDE"/>
    <property type="match status" value="1"/>
</dbReference>
<dbReference type="Pfam" id="PF00275">
    <property type="entry name" value="EPSP_synthase"/>
    <property type="match status" value="1"/>
</dbReference>
<dbReference type="PIRSF" id="PIRSF000505">
    <property type="entry name" value="EPSPS"/>
    <property type="match status" value="1"/>
</dbReference>
<dbReference type="SUPFAM" id="SSF55205">
    <property type="entry name" value="EPT/RTPC-like"/>
    <property type="match status" value="1"/>
</dbReference>
<dbReference type="PROSITE" id="PS00104">
    <property type="entry name" value="EPSP_SYNTHASE_1"/>
    <property type="match status" value="1"/>
</dbReference>
<dbReference type="PROSITE" id="PS00885">
    <property type="entry name" value="EPSP_SYNTHASE_2"/>
    <property type="match status" value="1"/>
</dbReference>
<evidence type="ECO:0000255" key="1">
    <source>
        <dbReference type="HAMAP-Rule" id="MF_00210"/>
    </source>
</evidence>
<comment type="function">
    <text evidence="1">Catalyzes the transfer of the enolpyruvyl moiety of phosphoenolpyruvate (PEP) to the 5-hydroxyl of shikimate-3-phosphate (S3P) to produce enolpyruvyl shikimate-3-phosphate and inorganic phosphate.</text>
</comment>
<comment type="catalytic activity">
    <reaction evidence="1">
        <text>3-phosphoshikimate + phosphoenolpyruvate = 5-O-(1-carboxyvinyl)-3-phosphoshikimate + phosphate</text>
        <dbReference type="Rhea" id="RHEA:21256"/>
        <dbReference type="ChEBI" id="CHEBI:43474"/>
        <dbReference type="ChEBI" id="CHEBI:57701"/>
        <dbReference type="ChEBI" id="CHEBI:58702"/>
        <dbReference type="ChEBI" id="CHEBI:145989"/>
        <dbReference type="EC" id="2.5.1.19"/>
    </reaction>
    <physiologicalReaction direction="left-to-right" evidence="1">
        <dbReference type="Rhea" id="RHEA:21257"/>
    </physiologicalReaction>
</comment>
<comment type="pathway">
    <text evidence="1">Metabolic intermediate biosynthesis; chorismate biosynthesis.</text>
</comment>
<comment type="subunit">
    <text evidence="1">Monomer.</text>
</comment>
<comment type="subcellular location">
    <subcellularLocation>
        <location evidence="1">Cytoplasm</location>
    </subcellularLocation>
</comment>
<comment type="similarity">
    <text evidence="1">Belongs to the EPSP synthase family.</text>
</comment>
<proteinExistence type="inferred from homology"/>